<reference key="1">
    <citation type="journal article" date="2008" name="DNA Res.">
        <title>The whole-genome sequencing of the obligate intracellular bacterium Orientia tsutsugamushi revealed massive gene amplification during reductive genome evolution.</title>
        <authorList>
            <person name="Nakayama K."/>
            <person name="Yamashita A."/>
            <person name="Kurokawa K."/>
            <person name="Morimoto T."/>
            <person name="Ogawa M."/>
            <person name="Fukuhara M."/>
            <person name="Urakami H."/>
            <person name="Ohnishi M."/>
            <person name="Uchiyama I."/>
            <person name="Ogura Y."/>
            <person name="Ooka T."/>
            <person name="Oshima K."/>
            <person name="Tamura A."/>
            <person name="Hattori M."/>
            <person name="Hayashi T."/>
        </authorList>
    </citation>
    <scope>NUCLEOTIDE SEQUENCE [LARGE SCALE GENOMIC DNA]</scope>
    <source>
        <strain>Ikeda</strain>
    </source>
</reference>
<sequence>MNDIFIIAGPTASGKSELAMLLAQKFNGVIINADSMQIYKEIPIITASPSISEKQQIDHYLYNYVSIFHSDINELNSFDNISQSKVNADYNNINLQQSITKHLTDRRYSVAKYVQEACKIIRSVIHALKLPIVVGGSGMYINALVYGIHHIPEITLEIRMQVQDLYKKLTKQEFYQKLIDLDPISKNYIHSSDAQRMIRAYEVVLQTNKSIFSYHNSKLVSPLEGYNVKKIILLPDRQLLYQNCNQRFAKLATNGELVDEIIKIKPYYDHISISAKKALGINEIISYLNQELTIEEAITIAQQKIRQYAKRQLTWFRNQTINGYTLHYQSMSELYKTQVNDVFFN</sequence>
<feature type="chain" id="PRO_0000377249" description="tRNA dimethylallyltransferase">
    <location>
        <begin position="1"/>
        <end position="345"/>
    </location>
</feature>
<feature type="region of interest" description="Interaction with substrate tRNA" evidence="1">
    <location>
        <begin position="34"/>
        <end position="37"/>
    </location>
</feature>
<feature type="region of interest" description="Interaction with substrate tRNA" evidence="1">
    <location>
        <begin position="195"/>
        <end position="199"/>
    </location>
</feature>
<feature type="binding site" evidence="1">
    <location>
        <begin position="9"/>
        <end position="16"/>
    </location>
    <ligand>
        <name>ATP</name>
        <dbReference type="ChEBI" id="CHEBI:30616"/>
    </ligand>
</feature>
<feature type="binding site" evidence="1">
    <location>
        <begin position="11"/>
        <end position="16"/>
    </location>
    <ligand>
        <name>substrate</name>
    </ligand>
</feature>
<feature type="site" description="Interaction with substrate tRNA" evidence="1">
    <location>
        <position position="137"/>
    </location>
</feature>
<feature type="site" description="Interaction with substrate tRNA" evidence="1">
    <location>
        <position position="159"/>
    </location>
</feature>
<dbReference type="EC" id="2.5.1.75" evidence="1"/>
<dbReference type="EMBL" id="AP008981">
    <property type="protein sequence ID" value="BAG41083.1"/>
    <property type="molecule type" value="Genomic_DNA"/>
</dbReference>
<dbReference type="RefSeq" id="WP_012462079.1">
    <property type="nucleotide sequence ID" value="NC_010793.1"/>
</dbReference>
<dbReference type="SMR" id="B3CUN6"/>
<dbReference type="KEGG" id="ott:OTT_1625"/>
<dbReference type="HOGENOM" id="CLU_032616_0_1_5"/>
<dbReference type="OrthoDB" id="9776390at2"/>
<dbReference type="Proteomes" id="UP000001033">
    <property type="component" value="Chromosome"/>
</dbReference>
<dbReference type="GO" id="GO:0005524">
    <property type="term" value="F:ATP binding"/>
    <property type="evidence" value="ECO:0007669"/>
    <property type="project" value="UniProtKB-UniRule"/>
</dbReference>
<dbReference type="GO" id="GO:0052381">
    <property type="term" value="F:tRNA dimethylallyltransferase activity"/>
    <property type="evidence" value="ECO:0007669"/>
    <property type="project" value="UniProtKB-UniRule"/>
</dbReference>
<dbReference type="GO" id="GO:0006400">
    <property type="term" value="P:tRNA modification"/>
    <property type="evidence" value="ECO:0007669"/>
    <property type="project" value="TreeGrafter"/>
</dbReference>
<dbReference type="Gene3D" id="1.10.20.140">
    <property type="match status" value="1"/>
</dbReference>
<dbReference type="Gene3D" id="3.40.50.300">
    <property type="entry name" value="P-loop containing nucleotide triphosphate hydrolases"/>
    <property type="match status" value="1"/>
</dbReference>
<dbReference type="HAMAP" id="MF_00185">
    <property type="entry name" value="IPP_trans"/>
    <property type="match status" value="1"/>
</dbReference>
<dbReference type="InterPro" id="IPR039657">
    <property type="entry name" value="Dimethylallyltransferase"/>
</dbReference>
<dbReference type="InterPro" id="IPR018022">
    <property type="entry name" value="IPT"/>
</dbReference>
<dbReference type="InterPro" id="IPR027417">
    <property type="entry name" value="P-loop_NTPase"/>
</dbReference>
<dbReference type="PANTHER" id="PTHR11088">
    <property type="entry name" value="TRNA DIMETHYLALLYLTRANSFERASE"/>
    <property type="match status" value="1"/>
</dbReference>
<dbReference type="PANTHER" id="PTHR11088:SF60">
    <property type="entry name" value="TRNA DIMETHYLALLYLTRANSFERASE"/>
    <property type="match status" value="1"/>
</dbReference>
<dbReference type="Pfam" id="PF01715">
    <property type="entry name" value="IPPT"/>
    <property type="match status" value="1"/>
</dbReference>
<dbReference type="Pfam" id="PF01745">
    <property type="entry name" value="IPT"/>
    <property type="match status" value="1"/>
</dbReference>
<dbReference type="SUPFAM" id="SSF52540">
    <property type="entry name" value="P-loop containing nucleoside triphosphate hydrolases"/>
    <property type="match status" value="2"/>
</dbReference>
<accession>B3CUN6</accession>
<protein>
    <recommendedName>
        <fullName evidence="1">tRNA dimethylallyltransferase</fullName>
        <ecNumber evidence="1">2.5.1.75</ecNumber>
    </recommendedName>
    <alternativeName>
        <fullName evidence="1">Dimethylallyl diphosphate:tRNA dimethylallyltransferase</fullName>
        <shortName evidence="1">DMAPP:tRNA dimethylallyltransferase</shortName>
        <shortName evidence="1">DMATase</shortName>
    </alternativeName>
    <alternativeName>
        <fullName evidence="1">Isopentenyl-diphosphate:tRNA isopentenyltransferase</fullName>
        <shortName evidence="1">IPP transferase</shortName>
        <shortName evidence="1">IPPT</shortName>
        <shortName evidence="1">IPTase</shortName>
    </alternativeName>
</protein>
<keyword id="KW-0067">ATP-binding</keyword>
<keyword id="KW-0460">Magnesium</keyword>
<keyword id="KW-0547">Nucleotide-binding</keyword>
<keyword id="KW-0808">Transferase</keyword>
<keyword id="KW-0819">tRNA processing</keyword>
<evidence type="ECO:0000255" key="1">
    <source>
        <dbReference type="HAMAP-Rule" id="MF_00185"/>
    </source>
</evidence>
<comment type="function">
    <text evidence="1">Catalyzes the transfer of a dimethylallyl group onto the adenine at position 37 in tRNAs that read codons beginning with uridine, leading to the formation of N6-(dimethylallyl)adenosine (i(6)A).</text>
</comment>
<comment type="catalytic activity">
    <reaction evidence="1">
        <text>adenosine(37) in tRNA + dimethylallyl diphosphate = N(6)-dimethylallyladenosine(37) in tRNA + diphosphate</text>
        <dbReference type="Rhea" id="RHEA:26482"/>
        <dbReference type="Rhea" id="RHEA-COMP:10162"/>
        <dbReference type="Rhea" id="RHEA-COMP:10375"/>
        <dbReference type="ChEBI" id="CHEBI:33019"/>
        <dbReference type="ChEBI" id="CHEBI:57623"/>
        <dbReference type="ChEBI" id="CHEBI:74411"/>
        <dbReference type="ChEBI" id="CHEBI:74415"/>
        <dbReference type="EC" id="2.5.1.75"/>
    </reaction>
</comment>
<comment type="cofactor">
    <cofactor evidence="1">
        <name>Mg(2+)</name>
        <dbReference type="ChEBI" id="CHEBI:18420"/>
    </cofactor>
</comment>
<comment type="subunit">
    <text evidence="1">Monomer.</text>
</comment>
<comment type="similarity">
    <text evidence="1">Belongs to the IPP transferase family.</text>
</comment>
<name>MIAA_ORITI</name>
<organism>
    <name type="scientific">Orientia tsutsugamushi (strain Ikeda)</name>
    <name type="common">Rickettsia tsutsugamushi</name>
    <dbReference type="NCBI Taxonomy" id="334380"/>
    <lineage>
        <taxon>Bacteria</taxon>
        <taxon>Pseudomonadati</taxon>
        <taxon>Pseudomonadota</taxon>
        <taxon>Alphaproteobacteria</taxon>
        <taxon>Rickettsiales</taxon>
        <taxon>Rickettsiaceae</taxon>
        <taxon>Rickettsieae</taxon>
        <taxon>Orientia</taxon>
    </lineage>
</organism>
<gene>
    <name evidence="1" type="primary">miaA</name>
    <name type="ordered locus">OTT_1625</name>
</gene>
<proteinExistence type="inferred from homology"/>